<feature type="chain" id="PRO_0000313419" description="DNA ligase">
    <location>
        <begin position="1"/>
        <end position="671"/>
    </location>
</feature>
<feature type="domain" description="BRCT" evidence="1">
    <location>
        <begin position="593"/>
        <end position="671"/>
    </location>
</feature>
<feature type="active site" description="N6-AMP-lysine intermediate" evidence="1">
    <location>
        <position position="115"/>
    </location>
</feature>
<feature type="binding site" evidence="1">
    <location>
        <begin position="32"/>
        <end position="36"/>
    </location>
    <ligand>
        <name>NAD(+)</name>
        <dbReference type="ChEBI" id="CHEBI:57540"/>
    </ligand>
</feature>
<feature type="binding site" evidence="1">
    <location>
        <begin position="81"/>
        <end position="82"/>
    </location>
    <ligand>
        <name>NAD(+)</name>
        <dbReference type="ChEBI" id="CHEBI:57540"/>
    </ligand>
</feature>
<feature type="binding site" evidence="1">
    <location>
        <position position="113"/>
    </location>
    <ligand>
        <name>NAD(+)</name>
        <dbReference type="ChEBI" id="CHEBI:57540"/>
    </ligand>
</feature>
<feature type="binding site" evidence="1">
    <location>
        <position position="136"/>
    </location>
    <ligand>
        <name>NAD(+)</name>
        <dbReference type="ChEBI" id="CHEBI:57540"/>
    </ligand>
</feature>
<feature type="binding site" evidence="1">
    <location>
        <position position="173"/>
    </location>
    <ligand>
        <name>NAD(+)</name>
        <dbReference type="ChEBI" id="CHEBI:57540"/>
    </ligand>
</feature>
<feature type="binding site" evidence="1">
    <location>
        <position position="290"/>
    </location>
    <ligand>
        <name>NAD(+)</name>
        <dbReference type="ChEBI" id="CHEBI:57540"/>
    </ligand>
</feature>
<feature type="binding site" evidence="1">
    <location>
        <position position="314"/>
    </location>
    <ligand>
        <name>NAD(+)</name>
        <dbReference type="ChEBI" id="CHEBI:57540"/>
    </ligand>
</feature>
<feature type="binding site" evidence="1">
    <location>
        <position position="408"/>
    </location>
    <ligand>
        <name>Zn(2+)</name>
        <dbReference type="ChEBI" id="CHEBI:29105"/>
    </ligand>
</feature>
<feature type="binding site" evidence="1">
    <location>
        <position position="411"/>
    </location>
    <ligand>
        <name>Zn(2+)</name>
        <dbReference type="ChEBI" id="CHEBI:29105"/>
    </ligand>
</feature>
<feature type="binding site" evidence="1">
    <location>
        <position position="426"/>
    </location>
    <ligand>
        <name>Zn(2+)</name>
        <dbReference type="ChEBI" id="CHEBI:29105"/>
    </ligand>
</feature>
<feature type="binding site" evidence="1">
    <location>
        <position position="432"/>
    </location>
    <ligand>
        <name>Zn(2+)</name>
        <dbReference type="ChEBI" id="CHEBI:29105"/>
    </ligand>
</feature>
<gene>
    <name evidence="1" type="primary">ligA</name>
    <name type="ordered locus">SPA0438</name>
</gene>
<sequence length="671" mass="73476">MEPIEQQLTELRTTLRHHEYLYHVMDAPEIPDAEYDRLMRELRELEAQRPDLITPDSPTQRVGAAPLTAFNQIRHEVPMLSLDNVFDEESFLAFNKRVQDRLKSTENVIWCCELKLDGLAVSILYENGVLVSAATRGDGTTGEDITSNVRTIRAIPLKLHGDNIPARLEVRGEVFLPQAGFEKINEDARRTGGKVFANPRNAAAGSLRQLDPRITAKRPLTFFCYGVGILEGGELPDTHLGRLLQFKAWGLPVSDRVTLCDSPQAVLDFYHNVEKDRPTLGFDIDGVVIKVNSLALQEQLGFVARAPRWAVAFKFPAQEQMTFVRDVEFQVGRTGAITPVARLEPVQVAGVLVSNATLHNADEIERLGLRIGDKVVIRRAGDVIPQVVNVVLSERPEETRPIVFPTHCPVCGSDVERVEGEAVTRCTGGLICGAQRKESLKHFVSRRAMDVDGMGDKIIDQLVEREYVHTPADLFRLTAGKLTGLDRMGPKSAQNVVNALEKAKATTFARFLYALGIREVGEATAAGLAAYFGTLEALQAATIDELQKVPDVGIVVATHVFNFFAEESNRDVIVQLLAEGVHWPAPVVINVQEIDSPFAGKTVVLTGSLSQMSRDDAKARLVALGAKVAGSVSKKTDLVIAGEAAGSKLAKAQELGINVIDEAEMIRLLGA</sequence>
<dbReference type="EC" id="6.5.1.2" evidence="1"/>
<dbReference type="EMBL" id="CP000026">
    <property type="protein sequence ID" value="AAV76449.1"/>
    <property type="molecule type" value="Genomic_DNA"/>
</dbReference>
<dbReference type="RefSeq" id="WP_000433272.1">
    <property type="nucleotide sequence ID" value="NC_006511.1"/>
</dbReference>
<dbReference type="SMR" id="Q5PNE2"/>
<dbReference type="KEGG" id="spt:SPA0438"/>
<dbReference type="HOGENOM" id="CLU_007764_2_1_6"/>
<dbReference type="Proteomes" id="UP000008185">
    <property type="component" value="Chromosome"/>
</dbReference>
<dbReference type="GO" id="GO:0005829">
    <property type="term" value="C:cytosol"/>
    <property type="evidence" value="ECO:0007669"/>
    <property type="project" value="TreeGrafter"/>
</dbReference>
<dbReference type="GO" id="GO:0003677">
    <property type="term" value="F:DNA binding"/>
    <property type="evidence" value="ECO:0007669"/>
    <property type="project" value="InterPro"/>
</dbReference>
<dbReference type="GO" id="GO:0003911">
    <property type="term" value="F:DNA ligase (NAD+) activity"/>
    <property type="evidence" value="ECO:0007669"/>
    <property type="project" value="UniProtKB-UniRule"/>
</dbReference>
<dbReference type="GO" id="GO:0046872">
    <property type="term" value="F:metal ion binding"/>
    <property type="evidence" value="ECO:0007669"/>
    <property type="project" value="UniProtKB-KW"/>
</dbReference>
<dbReference type="GO" id="GO:0006281">
    <property type="term" value="P:DNA repair"/>
    <property type="evidence" value="ECO:0007669"/>
    <property type="project" value="UniProtKB-KW"/>
</dbReference>
<dbReference type="GO" id="GO:0006260">
    <property type="term" value="P:DNA replication"/>
    <property type="evidence" value="ECO:0007669"/>
    <property type="project" value="UniProtKB-KW"/>
</dbReference>
<dbReference type="CDD" id="cd17748">
    <property type="entry name" value="BRCT_DNA_ligase_like"/>
    <property type="match status" value="1"/>
</dbReference>
<dbReference type="CDD" id="cd00114">
    <property type="entry name" value="LIGANc"/>
    <property type="match status" value="1"/>
</dbReference>
<dbReference type="FunFam" id="1.10.150.20:FF:000006">
    <property type="entry name" value="DNA ligase"/>
    <property type="match status" value="1"/>
</dbReference>
<dbReference type="FunFam" id="1.10.150.20:FF:000007">
    <property type="entry name" value="DNA ligase"/>
    <property type="match status" value="1"/>
</dbReference>
<dbReference type="FunFam" id="1.10.287.610:FF:000002">
    <property type="entry name" value="DNA ligase"/>
    <property type="match status" value="1"/>
</dbReference>
<dbReference type="FunFam" id="2.40.50.140:FF:000012">
    <property type="entry name" value="DNA ligase"/>
    <property type="match status" value="1"/>
</dbReference>
<dbReference type="FunFam" id="3.30.470.30:FF:000001">
    <property type="entry name" value="DNA ligase"/>
    <property type="match status" value="1"/>
</dbReference>
<dbReference type="FunFam" id="3.40.50.10190:FF:000004">
    <property type="entry name" value="DNA ligase"/>
    <property type="match status" value="1"/>
</dbReference>
<dbReference type="FunFam" id="6.20.10.30:FF:000001">
    <property type="entry name" value="DNA ligase"/>
    <property type="match status" value="1"/>
</dbReference>
<dbReference type="Gene3D" id="6.20.10.30">
    <property type="match status" value="1"/>
</dbReference>
<dbReference type="Gene3D" id="1.10.150.20">
    <property type="entry name" value="5' to 3' exonuclease, C-terminal subdomain"/>
    <property type="match status" value="2"/>
</dbReference>
<dbReference type="Gene3D" id="3.40.50.10190">
    <property type="entry name" value="BRCT domain"/>
    <property type="match status" value="1"/>
</dbReference>
<dbReference type="Gene3D" id="3.30.470.30">
    <property type="entry name" value="DNA ligase/mRNA capping enzyme"/>
    <property type="match status" value="1"/>
</dbReference>
<dbReference type="Gene3D" id="1.10.287.610">
    <property type="entry name" value="Helix hairpin bin"/>
    <property type="match status" value="1"/>
</dbReference>
<dbReference type="Gene3D" id="2.40.50.140">
    <property type="entry name" value="Nucleic acid-binding proteins"/>
    <property type="match status" value="1"/>
</dbReference>
<dbReference type="HAMAP" id="MF_01588">
    <property type="entry name" value="DNA_ligase_A"/>
    <property type="match status" value="1"/>
</dbReference>
<dbReference type="InterPro" id="IPR001357">
    <property type="entry name" value="BRCT_dom"/>
</dbReference>
<dbReference type="InterPro" id="IPR036420">
    <property type="entry name" value="BRCT_dom_sf"/>
</dbReference>
<dbReference type="InterPro" id="IPR041663">
    <property type="entry name" value="DisA/LigA_HHH"/>
</dbReference>
<dbReference type="InterPro" id="IPR001679">
    <property type="entry name" value="DNA_ligase"/>
</dbReference>
<dbReference type="InterPro" id="IPR018239">
    <property type="entry name" value="DNA_ligase_AS"/>
</dbReference>
<dbReference type="InterPro" id="IPR033136">
    <property type="entry name" value="DNA_ligase_CS"/>
</dbReference>
<dbReference type="InterPro" id="IPR013839">
    <property type="entry name" value="DNAligase_adenylation"/>
</dbReference>
<dbReference type="InterPro" id="IPR013840">
    <property type="entry name" value="DNAligase_N"/>
</dbReference>
<dbReference type="InterPro" id="IPR003583">
    <property type="entry name" value="Hlx-hairpin-Hlx_DNA-bd_motif"/>
</dbReference>
<dbReference type="InterPro" id="IPR012340">
    <property type="entry name" value="NA-bd_OB-fold"/>
</dbReference>
<dbReference type="InterPro" id="IPR004150">
    <property type="entry name" value="NAD_DNA_ligase_OB"/>
</dbReference>
<dbReference type="InterPro" id="IPR010994">
    <property type="entry name" value="RuvA_2-like"/>
</dbReference>
<dbReference type="InterPro" id="IPR004149">
    <property type="entry name" value="Znf_DNAligase_C4"/>
</dbReference>
<dbReference type="NCBIfam" id="TIGR00575">
    <property type="entry name" value="dnlj"/>
    <property type="match status" value="1"/>
</dbReference>
<dbReference type="NCBIfam" id="NF005932">
    <property type="entry name" value="PRK07956.1"/>
    <property type="match status" value="1"/>
</dbReference>
<dbReference type="PANTHER" id="PTHR23389">
    <property type="entry name" value="CHROMOSOME TRANSMISSION FIDELITY FACTOR 18"/>
    <property type="match status" value="1"/>
</dbReference>
<dbReference type="PANTHER" id="PTHR23389:SF9">
    <property type="entry name" value="DNA LIGASE"/>
    <property type="match status" value="1"/>
</dbReference>
<dbReference type="Pfam" id="PF00533">
    <property type="entry name" value="BRCT"/>
    <property type="match status" value="1"/>
</dbReference>
<dbReference type="Pfam" id="PF01653">
    <property type="entry name" value="DNA_ligase_aden"/>
    <property type="match status" value="1"/>
</dbReference>
<dbReference type="Pfam" id="PF03120">
    <property type="entry name" value="DNA_ligase_OB"/>
    <property type="match status" value="1"/>
</dbReference>
<dbReference type="Pfam" id="PF03119">
    <property type="entry name" value="DNA_ligase_ZBD"/>
    <property type="match status" value="1"/>
</dbReference>
<dbReference type="Pfam" id="PF12826">
    <property type="entry name" value="HHH_2"/>
    <property type="match status" value="1"/>
</dbReference>
<dbReference type="Pfam" id="PF14520">
    <property type="entry name" value="HHH_5"/>
    <property type="match status" value="1"/>
</dbReference>
<dbReference type="Pfam" id="PF22745">
    <property type="entry name" value="Nlig-Ia"/>
    <property type="match status" value="1"/>
</dbReference>
<dbReference type="PIRSF" id="PIRSF001604">
    <property type="entry name" value="LigA"/>
    <property type="match status" value="1"/>
</dbReference>
<dbReference type="SMART" id="SM00292">
    <property type="entry name" value="BRCT"/>
    <property type="match status" value="1"/>
</dbReference>
<dbReference type="SMART" id="SM00278">
    <property type="entry name" value="HhH1"/>
    <property type="match status" value="4"/>
</dbReference>
<dbReference type="SMART" id="SM00532">
    <property type="entry name" value="LIGANc"/>
    <property type="match status" value="1"/>
</dbReference>
<dbReference type="SUPFAM" id="SSF52113">
    <property type="entry name" value="BRCT domain"/>
    <property type="match status" value="1"/>
</dbReference>
<dbReference type="SUPFAM" id="SSF56091">
    <property type="entry name" value="DNA ligase/mRNA capping enzyme, catalytic domain"/>
    <property type="match status" value="1"/>
</dbReference>
<dbReference type="SUPFAM" id="SSF50249">
    <property type="entry name" value="Nucleic acid-binding proteins"/>
    <property type="match status" value="1"/>
</dbReference>
<dbReference type="SUPFAM" id="SSF47781">
    <property type="entry name" value="RuvA domain 2-like"/>
    <property type="match status" value="1"/>
</dbReference>
<dbReference type="PROSITE" id="PS50172">
    <property type="entry name" value="BRCT"/>
    <property type="match status" value="1"/>
</dbReference>
<dbReference type="PROSITE" id="PS01055">
    <property type="entry name" value="DNA_LIGASE_N1"/>
    <property type="match status" value="1"/>
</dbReference>
<dbReference type="PROSITE" id="PS01056">
    <property type="entry name" value="DNA_LIGASE_N2"/>
    <property type="match status" value="1"/>
</dbReference>
<keyword id="KW-0227">DNA damage</keyword>
<keyword id="KW-0234">DNA repair</keyword>
<keyword id="KW-0235">DNA replication</keyword>
<keyword id="KW-0436">Ligase</keyword>
<keyword id="KW-0460">Magnesium</keyword>
<keyword id="KW-0464">Manganese</keyword>
<keyword id="KW-0479">Metal-binding</keyword>
<keyword id="KW-0520">NAD</keyword>
<keyword id="KW-0862">Zinc</keyword>
<proteinExistence type="inferred from homology"/>
<evidence type="ECO:0000255" key="1">
    <source>
        <dbReference type="HAMAP-Rule" id="MF_01588"/>
    </source>
</evidence>
<name>DNLJ_SALPA</name>
<reference key="1">
    <citation type="journal article" date="2004" name="Nat. Genet.">
        <title>Comparison of genome degradation in Paratyphi A and Typhi, human-restricted serovars of Salmonella enterica that cause typhoid.</title>
        <authorList>
            <person name="McClelland M."/>
            <person name="Sanderson K.E."/>
            <person name="Clifton S.W."/>
            <person name="Latreille P."/>
            <person name="Porwollik S."/>
            <person name="Sabo A."/>
            <person name="Meyer R."/>
            <person name="Bieri T."/>
            <person name="Ozersky P."/>
            <person name="McLellan M."/>
            <person name="Harkins C.R."/>
            <person name="Wang C."/>
            <person name="Nguyen C."/>
            <person name="Berghoff A."/>
            <person name="Elliott G."/>
            <person name="Kohlberg S."/>
            <person name="Strong C."/>
            <person name="Du F."/>
            <person name="Carter J."/>
            <person name="Kremizki C."/>
            <person name="Layman D."/>
            <person name="Leonard S."/>
            <person name="Sun H."/>
            <person name="Fulton L."/>
            <person name="Nash W."/>
            <person name="Miner T."/>
            <person name="Minx P."/>
            <person name="Delehaunty K."/>
            <person name="Fronick C."/>
            <person name="Magrini V."/>
            <person name="Nhan M."/>
            <person name="Warren W."/>
            <person name="Florea L."/>
            <person name="Spieth J."/>
            <person name="Wilson R.K."/>
        </authorList>
    </citation>
    <scope>NUCLEOTIDE SEQUENCE [LARGE SCALE GENOMIC DNA]</scope>
    <source>
        <strain>ATCC 9150 / SARB42</strain>
    </source>
</reference>
<accession>Q5PNE2</accession>
<comment type="function">
    <text evidence="1">DNA ligase that catalyzes the formation of phosphodiester linkages between 5'-phosphoryl and 3'-hydroxyl groups in double-stranded DNA using NAD as a coenzyme and as the energy source for the reaction. It is essential for DNA replication and repair of damaged DNA.</text>
</comment>
<comment type="catalytic activity">
    <reaction evidence="1">
        <text>NAD(+) + (deoxyribonucleotide)n-3'-hydroxyl + 5'-phospho-(deoxyribonucleotide)m = (deoxyribonucleotide)n+m + AMP + beta-nicotinamide D-nucleotide.</text>
        <dbReference type="EC" id="6.5.1.2"/>
    </reaction>
</comment>
<comment type="cofactor">
    <cofactor evidence="1">
        <name>Mg(2+)</name>
        <dbReference type="ChEBI" id="CHEBI:18420"/>
    </cofactor>
    <cofactor evidence="1">
        <name>Mn(2+)</name>
        <dbReference type="ChEBI" id="CHEBI:29035"/>
    </cofactor>
</comment>
<comment type="similarity">
    <text evidence="1">Belongs to the NAD-dependent DNA ligase family. LigA subfamily.</text>
</comment>
<protein>
    <recommendedName>
        <fullName evidence="1">DNA ligase</fullName>
        <ecNumber evidence="1">6.5.1.2</ecNumber>
    </recommendedName>
    <alternativeName>
        <fullName evidence="1">Polydeoxyribonucleotide synthase [NAD(+)]</fullName>
    </alternativeName>
</protein>
<organism>
    <name type="scientific">Salmonella paratyphi A (strain ATCC 9150 / SARB42)</name>
    <dbReference type="NCBI Taxonomy" id="295319"/>
    <lineage>
        <taxon>Bacteria</taxon>
        <taxon>Pseudomonadati</taxon>
        <taxon>Pseudomonadota</taxon>
        <taxon>Gammaproteobacteria</taxon>
        <taxon>Enterobacterales</taxon>
        <taxon>Enterobacteriaceae</taxon>
        <taxon>Salmonella</taxon>
    </lineage>
</organism>